<proteinExistence type="evidence at protein level"/>
<organism>
    <name type="scientific">Homo sapiens</name>
    <name type="common">Human</name>
    <dbReference type="NCBI Taxonomy" id="9606"/>
    <lineage>
        <taxon>Eukaryota</taxon>
        <taxon>Metazoa</taxon>
        <taxon>Chordata</taxon>
        <taxon>Craniata</taxon>
        <taxon>Vertebrata</taxon>
        <taxon>Euteleostomi</taxon>
        <taxon>Mammalia</taxon>
        <taxon>Eutheria</taxon>
        <taxon>Euarchontoglires</taxon>
        <taxon>Primates</taxon>
        <taxon>Haplorrhini</taxon>
        <taxon>Catarrhini</taxon>
        <taxon>Hominidae</taxon>
        <taxon>Homo</taxon>
    </lineage>
</organism>
<evidence type="ECO:0000250" key="1"/>
<evidence type="ECO:0000250" key="2">
    <source>
        <dbReference type="UniProtKB" id="Q62760"/>
    </source>
</evidence>
<evidence type="ECO:0000250" key="3">
    <source>
        <dbReference type="UniProtKB" id="Q9DCC8"/>
    </source>
</evidence>
<evidence type="ECO:0000255" key="4"/>
<evidence type="ECO:0000269" key="5">
    <source>
    </source>
</evidence>
<evidence type="ECO:0000269" key="6">
    <source>
    </source>
</evidence>
<evidence type="ECO:0000269" key="7">
    <source>
    </source>
</evidence>
<evidence type="ECO:0000269" key="8">
    <source>
    </source>
</evidence>
<evidence type="ECO:0000269" key="9">
    <source>
    </source>
</evidence>
<evidence type="ECO:0000269" key="10">
    <source>
    </source>
</evidence>
<evidence type="ECO:0000269" key="11">
    <source>
    </source>
</evidence>
<evidence type="ECO:0000269" key="12">
    <source>
    </source>
</evidence>
<evidence type="ECO:0000269" key="13">
    <source>
    </source>
</evidence>
<evidence type="ECO:0000269" key="14">
    <source>
    </source>
</evidence>
<evidence type="ECO:0000305" key="15"/>
<evidence type="ECO:0007744" key="16">
    <source>
    </source>
</evidence>
<evidence type="ECO:0007744" key="17">
    <source>
    </source>
</evidence>
<evidence type="ECO:0007744" key="18">
    <source>
    </source>
</evidence>
<evidence type="ECO:0007744" key="19">
    <source>
    </source>
</evidence>
<evidence type="ECO:0007744" key="20">
    <source>
    </source>
</evidence>
<evidence type="ECO:0007744" key="21">
    <source>
    </source>
</evidence>
<evidence type="ECO:0007744" key="22">
    <source>
    </source>
</evidence>
<gene>
    <name type="primary">TOMM20</name>
    <name type="synonym">KIAA0016</name>
</gene>
<reference key="1">
    <citation type="journal article" date="1995" name="FEBS Lett.">
        <title>Identification of the human mitochondrial protein import receptor, huMas20p. Complementation of delta mas20 in yeast.</title>
        <authorList>
            <person name="Goping I.S."/>
            <person name="Millar D.G."/>
            <person name="Shore G.C."/>
        </authorList>
    </citation>
    <scope>NUCLEOTIDE SEQUENCE [MRNA]</scope>
    <source>
        <tissue>Fibroblast</tissue>
    </source>
</reference>
<reference key="2">
    <citation type="journal article" date="1995" name="FEBS Lett.">
        <title>A human homolog of the mitochondrial protein import receptor Mom19 can assemble with the yeast mitochondrial receptor complex.</title>
        <authorList>
            <person name="Seki N."/>
            <person name="Moczko M."/>
            <person name="Nagase T."/>
            <person name="Zufall N."/>
            <person name="Ehmann B."/>
            <person name="Dietmeier K."/>
            <person name="Schaefer E."/>
            <person name="Nomura N."/>
            <person name="Pfanner N."/>
        </authorList>
    </citation>
    <scope>NUCLEOTIDE SEQUENCE [MRNA]</scope>
</reference>
<reference key="3">
    <citation type="journal article" date="1999" name="Gene">
        <title>Gene structure of the human mitochondrial outer membrane receptor tom20 and evolutionary study of its family of processed pseudogenes.</title>
        <authorList>
            <person name="Hernandez J.M."/>
            <person name="Giner P."/>
            <person name="Hernandez-Yago J."/>
        </authorList>
    </citation>
    <scope>NUCLEOTIDE SEQUENCE [GENOMIC DNA]</scope>
</reference>
<reference key="4">
    <citation type="journal article" date="1994" name="DNA Res.">
        <title>Prediction of the coding sequences of unidentified human genes. I. The coding sequences of 40 new genes (KIAA0001-KIAA0040) deduced by analysis of randomly sampled cDNA clones from human immature myeloid cell line KG-1.</title>
        <authorList>
            <person name="Nomura N."/>
            <person name="Miyajima N."/>
            <person name="Sazuka T."/>
            <person name="Tanaka A."/>
            <person name="Kawarabayasi Y."/>
            <person name="Sato S."/>
            <person name="Nagase T."/>
            <person name="Seki N."/>
            <person name="Ishikawa K."/>
            <person name="Tabata S."/>
        </authorList>
    </citation>
    <scope>NUCLEOTIDE SEQUENCE [LARGE SCALE MRNA]</scope>
    <source>
        <tissue>Bone marrow</tissue>
    </source>
</reference>
<reference key="5">
    <citation type="journal article" date="2004" name="Nat. Genet.">
        <title>Complete sequencing and characterization of 21,243 full-length human cDNAs.</title>
        <authorList>
            <person name="Ota T."/>
            <person name="Suzuki Y."/>
            <person name="Nishikawa T."/>
            <person name="Otsuki T."/>
            <person name="Sugiyama T."/>
            <person name="Irie R."/>
            <person name="Wakamatsu A."/>
            <person name="Hayashi K."/>
            <person name="Sato H."/>
            <person name="Nagai K."/>
            <person name="Kimura K."/>
            <person name="Makita H."/>
            <person name="Sekine M."/>
            <person name="Obayashi M."/>
            <person name="Nishi T."/>
            <person name="Shibahara T."/>
            <person name="Tanaka T."/>
            <person name="Ishii S."/>
            <person name="Yamamoto J."/>
            <person name="Saito K."/>
            <person name="Kawai Y."/>
            <person name="Isono Y."/>
            <person name="Nakamura Y."/>
            <person name="Nagahari K."/>
            <person name="Murakami K."/>
            <person name="Yasuda T."/>
            <person name="Iwayanagi T."/>
            <person name="Wagatsuma M."/>
            <person name="Shiratori A."/>
            <person name="Sudo H."/>
            <person name="Hosoiri T."/>
            <person name="Kaku Y."/>
            <person name="Kodaira H."/>
            <person name="Kondo H."/>
            <person name="Sugawara M."/>
            <person name="Takahashi M."/>
            <person name="Kanda K."/>
            <person name="Yokoi T."/>
            <person name="Furuya T."/>
            <person name="Kikkawa E."/>
            <person name="Omura Y."/>
            <person name="Abe K."/>
            <person name="Kamihara K."/>
            <person name="Katsuta N."/>
            <person name="Sato K."/>
            <person name="Tanikawa M."/>
            <person name="Yamazaki M."/>
            <person name="Ninomiya K."/>
            <person name="Ishibashi T."/>
            <person name="Yamashita H."/>
            <person name="Murakawa K."/>
            <person name="Fujimori K."/>
            <person name="Tanai H."/>
            <person name="Kimata M."/>
            <person name="Watanabe M."/>
            <person name="Hiraoka S."/>
            <person name="Chiba Y."/>
            <person name="Ishida S."/>
            <person name="Ono Y."/>
            <person name="Takiguchi S."/>
            <person name="Watanabe S."/>
            <person name="Yosida M."/>
            <person name="Hotuta T."/>
            <person name="Kusano J."/>
            <person name="Kanehori K."/>
            <person name="Takahashi-Fujii A."/>
            <person name="Hara H."/>
            <person name="Tanase T.-O."/>
            <person name="Nomura Y."/>
            <person name="Togiya S."/>
            <person name="Komai F."/>
            <person name="Hara R."/>
            <person name="Takeuchi K."/>
            <person name="Arita M."/>
            <person name="Imose N."/>
            <person name="Musashino K."/>
            <person name="Yuuki H."/>
            <person name="Oshima A."/>
            <person name="Sasaki N."/>
            <person name="Aotsuka S."/>
            <person name="Yoshikawa Y."/>
            <person name="Matsunawa H."/>
            <person name="Ichihara T."/>
            <person name="Shiohata N."/>
            <person name="Sano S."/>
            <person name="Moriya S."/>
            <person name="Momiyama H."/>
            <person name="Satoh N."/>
            <person name="Takami S."/>
            <person name="Terashima Y."/>
            <person name="Suzuki O."/>
            <person name="Nakagawa S."/>
            <person name="Senoh A."/>
            <person name="Mizoguchi H."/>
            <person name="Goto Y."/>
            <person name="Shimizu F."/>
            <person name="Wakebe H."/>
            <person name="Hishigaki H."/>
            <person name="Watanabe T."/>
            <person name="Sugiyama A."/>
            <person name="Takemoto M."/>
            <person name="Kawakami B."/>
            <person name="Yamazaki M."/>
            <person name="Watanabe K."/>
            <person name="Kumagai A."/>
            <person name="Itakura S."/>
            <person name="Fukuzumi Y."/>
            <person name="Fujimori Y."/>
            <person name="Komiyama M."/>
            <person name="Tashiro H."/>
            <person name="Tanigami A."/>
            <person name="Fujiwara T."/>
            <person name="Ono T."/>
            <person name="Yamada K."/>
            <person name="Fujii Y."/>
            <person name="Ozaki K."/>
            <person name="Hirao M."/>
            <person name="Ohmori Y."/>
            <person name="Kawabata A."/>
            <person name="Hikiji T."/>
            <person name="Kobatake N."/>
            <person name="Inagaki H."/>
            <person name="Ikema Y."/>
            <person name="Okamoto S."/>
            <person name="Okitani R."/>
            <person name="Kawakami T."/>
            <person name="Noguchi S."/>
            <person name="Itoh T."/>
            <person name="Shigeta K."/>
            <person name="Senba T."/>
            <person name="Matsumura K."/>
            <person name="Nakajima Y."/>
            <person name="Mizuno T."/>
            <person name="Morinaga M."/>
            <person name="Sasaki M."/>
            <person name="Togashi T."/>
            <person name="Oyama M."/>
            <person name="Hata H."/>
            <person name="Watanabe M."/>
            <person name="Komatsu T."/>
            <person name="Mizushima-Sugano J."/>
            <person name="Satoh T."/>
            <person name="Shirai Y."/>
            <person name="Takahashi Y."/>
            <person name="Nakagawa K."/>
            <person name="Okumura K."/>
            <person name="Nagase T."/>
            <person name="Nomura N."/>
            <person name="Kikuchi H."/>
            <person name="Masuho Y."/>
            <person name="Yamashita R."/>
            <person name="Nakai K."/>
            <person name="Yada T."/>
            <person name="Nakamura Y."/>
            <person name="Ohara O."/>
            <person name="Isogai T."/>
            <person name="Sugano S."/>
        </authorList>
    </citation>
    <scope>NUCLEOTIDE SEQUENCE [LARGE SCALE MRNA]</scope>
    <source>
        <tissue>Brain</tissue>
    </source>
</reference>
<reference key="6">
    <citation type="submission" date="2004-06" db="EMBL/GenBank/DDBJ databases">
        <title>Cloning of human full open reading frames in Gateway(TM) system entry vector (pDONR201).</title>
        <authorList>
            <person name="Ebert L."/>
            <person name="Schick M."/>
            <person name="Neubert P."/>
            <person name="Schatten R."/>
            <person name="Henze S."/>
            <person name="Korn B."/>
        </authorList>
    </citation>
    <scope>NUCLEOTIDE SEQUENCE [LARGE SCALE MRNA]</scope>
</reference>
<reference key="7">
    <citation type="journal article" date="2006" name="Nature">
        <title>The DNA sequence and biological annotation of human chromosome 1.</title>
        <authorList>
            <person name="Gregory S.G."/>
            <person name="Barlow K.F."/>
            <person name="McLay K.E."/>
            <person name="Kaul R."/>
            <person name="Swarbreck D."/>
            <person name="Dunham A."/>
            <person name="Scott C.E."/>
            <person name="Howe K.L."/>
            <person name="Woodfine K."/>
            <person name="Spencer C.C.A."/>
            <person name="Jones M.C."/>
            <person name="Gillson C."/>
            <person name="Searle S."/>
            <person name="Zhou Y."/>
            <person name="Kokocinski F."/>
            <person name="McDonald L."/>
            <person name="Evans R."/>
            <person name="Phillips K."/>
            <person name="Atkinson A."/>
            <person name="Cooper R."/>
            <person name="Jones C."/>
            <person name="Hall R.E."/>
            <person name="Andrews T.D."/>
            <person name="Lloyd C."/>
            <person name="Ainscough R."/>
            <person name="Almeida J.P."/>
            <person name="Ambrose K.D."/>
            <person name="Anderson F."/>
            <person name="Andrew R.W."/>
            <person name="Ashwell R.I.S."/>
            <person name="Aubin K."/>
            <person name="Babbage A.K."/>
            <person name="Bagguley C.L."/>
            <person name="Bailey J."/>
            <person name="Beasley H."/>
            <person name="Bethel G."/>
            <person name="Bird C.P."/>
            <person name="Bray-Allen S."/>
            <person name="Brown J.Y."/>
            <person name="Brown A.J."/>
            <person name="Buckley D."/>
            <person name="Burton J."/>
            <person name="Bye J."/>
            <person name="Carder C."/>
            <person name="Chapman J.C."/>
            <person name="Clark S.Y."/>
            <person name="Clarke G."/>
            <person name="Clee C."/>
            <person name="Cobley V."/>
            <person name="Collier R.E."/>
            <person name="Corby N."/>
            <person name="Coville G.J."/>
            <person name="Davies J."/>
            <person name="Deadman R."/>
            <person name="Dunn M."/>
            <person name="Earthrowl M."/>
            <person name="Ellington A.G."/>
            <person name="Errington H."/>
            <person name="Frankish A."/>
            <person name="Frankland J."/>
            <person name="French L."/>
            <person name="Garner P."/>
            <person name="Garnett J."/>
            <person name="Gay L."/>
            <person name="Ghori M.R.J."/>
            <person name="Gibson R."/>
            <person name="Gilby L.M."/>
            <person name="Gillett W."/>
            <person name="Glithero R.J."/>
            <person name="Grafham D.V."/>
            <person name="Griffiths C."/>
            <person name="Griffiths-Jones S."/>
            <person name="Grocock R."/>
            <person name="Hammond S."/>
            <person name="Harrison E.S.I."/>
            <person name="Hart E."/>
            <person name="Haugen E."/>
            <person name="Heath P.D."/>
            <person name="Holmes S."/>
            <person name="Holt K."/>
            <person name="Howden P.J."/>
            <person name="Hunt A.R."/>
            <person name="Hunt S.E."/>
            <person name="Hunter G."/>
            <person name="Isherwood J."/>
            <person name="James R."/>
            <person name="Johnson C."/>
            <person name="Johnson D."/>
            <person name="Joy A."/>
            <person name="Kay M."/>
            <person name="Kershaw J.K."/>
            <person name="Kibukawa M."/>
            <person name="Kimberley A.M."/>
            <person name="King A."/>
            <person name="Knights A.J."/>
            <person name="Lad H."/>
            <person name="Laird G."/>
            <person name="Lawlor S."/>
            <person name="Leongamornlert D.A."/>
            <person name="Lloyd D.M."/>
            <person name="Loveland J."/>
            <person name="Lovell J."/>
            <person name="Lush M.J."/>
            <person name="Lyne R."/>
            <person name="Martin S."/>
            <person name="Mashreghi-Mohammadi M."/>
            <person name="Matthews L."/>
            <person name="Matthews N.S.W."/>
            <person name="McLaren S."/>
            <person name="Milne S."/>
            <person name="Mistry S."/>
            <person name="Moore M.J.F."/>
            <person name="Nickerson T."/>
            <person name="O'Dell C.N."/>
            <person name="Oliver K."/>
            <person name="Palmeiri A."/>
            <person name="Palmer S.A."/>
            <person name="Parker A."/>
            <person name="Patel D."/>
            <person name="Pearce A.V."/>
            <person name="Peck A.I."/>
            <person name="Pelan S."/>
            <person name="Phelps K."/>
            <person name="Phillimore B.J."/>
            <person name="Plumb R."/>
            <person name="Rajan J."/>
            <person name="Raymond C."/>
            <person name="Rouse G."/>
            <person name="Saenphimmachak C."/>
            <person name="Sehra H.K."/>
            <person name="Sheridan E."/>
            <person name="Shownkeen R."/>
            <person name="Sims S."/>
            <person name="Skuce C.D."/>
            <person name="Smith M."/>
            <person name="Steward C."/>
            <person name="Subramanian S."/>
            <person name="Sycamore N."/>
            <person name="Tracey A."/>
            <person name="Tromans A."/>
            <person name="Van Helmond Z."/>
            <person name="Wall M."/>
            <person name="Wallis J.M."/>
            <person name="White S."/>
            <person name="Whitehead S.L."/>
            <person name="Wilkinson J.E."/>
            <person name="Willey D.L."/>
            <person name="Williams H."/>
            <person name="Wilming L."/>
            <person name="Wray P.W."/>
            <person name="Wu Z."/>
            <person name="Coulson A."/>
            <person name="Vaudin M."/>
            <person name="Sulston J.E."/>
            <person name="Durbin R.M."/>
            <person name="Hubbard T."/>
            <person name="Wooster R."/>
            <person name="Dunham I."/>
            <person name="Carter N.P."/>
            <person name="McVean G."/>
            <person name="Ross M.T."/>
            <person name="Harrow J."/>
            <person name="Olson M.V."/>
            <person name="Beck S."/>
            <person name="Rogers J."/>
            <person name="Bentley D.R."/>
        </authorList>
    </citation>
    <scope>NUCLEOTIDE SEQUENCE [LARGE SCALE GENOMIC DNA]</scope>
</reference>
<reference key="8">
    <citation type="submission" date="2005-07" db="EMBL/GenBank/DDBJ databases">
        <authorList>
            <person name="Mural R.J."/>
            <person name="Istrail S."/>
            <person name="Sutton G.G."/>
            <person name="Florea L."/>
            <person name="Halpern A.L."/>
            <person name="Mobarry C.M."/>
            <person name="Lippert R."/>
            <person name="Walenz B."/>
            <person name="Shatkay H."/>
            <person name="Dew I."/>
            <person name="Miller J.R."/>
            <person name="Flanigan M.J."/>
            <person name="Edwards N.J."/>
            <person name="Bolanos R."/>
            <person name="Fasulo D."/>
            <person name="Halldorsson B.V."/>
            <person name="Hannenhalli S."/>
            <person name="Turner R."/>
            <person name="Yooseph S."/>
            <person name="Lu F."/>
            <person name="Nusskern D.R."/>
            <person name="Shue B.C."/>
            <person name="Zheng X.H."/>
            <person name="Zhong F."/>
            <person name="Delcher A.L."/>
            <person name="Huson D.H."/>
            <person name="Kravitz S.A."/>
            <person name="Mouchard L."/>
            <person name="Reinert K."/>
            <person name="Remington K.A."/>
            <person name="Clark A.G."/>
            <person name="Waterman M.S."/>
            <person name="Eichler E.E."/>
            <person name="Adams M.D."/>
            <person name="Hunkapiller M.W."/>
            <person name="Myers E.W."/>
            <person name="Venter J.C."/>
        </authorList>
    </citation>
    <scope>NUCLEOTIDE SEQUENCE [LARGE SCALE GENOMIC DNA]</scope>
</reference>
<reference key="9">
    <citation type="journal article" date="2004" name="Genome Res.">
        <title>The status, quality, and expansion of the NIH full-length cDNA project: the Mammalian Gene Collection (MGC).</title>
        <authorList>
            <consortium name="The MGC Project Team"/>
        </authorList>
    </citation>
    <scope>NUCLEOTIDE SEQUENCE [LARGE SCALE MRNA]</scope>
    <source>
        <tissue>Brain</tissue>
        <tissue>Cervix</tissue>
        <tissue>Eye</tissue>
        <tissue>Pancreas</tissue>
    </source>
</reference>
<reference key="10">
    <citation type="journal article" date="2006" name="Cell">
        <title>Global, in vivo, and site-specific phosphorylation dynamics in signaling networks.</title>
        <authorList>
            <person name="Olsen J.V."/>
            <person name="Blagoev B."/>
            <person name="Gnad F."/>
            <person name="Macek B."/>
            <person name="Kumar C."/>
            <person name="Mortensen P."/>
            <person name="Mann M."/>
        </authorList>
    </citation>
    <scope>PHOSPHORYLATION [LARGE SCALE ANALYSIS] AT SER-138</scope>
    <scope>IDENTIFICATION BY MASS SPECTROMETRY [LARGE SCALE ANALYSIS]</scope>
    <source>
        <tissue>Cervix carcinoma</tissue>
    </source>
</reference>
<reference key="11">
    <citation type="journal article" date="2008" name="Biochem. Biophys. Res. Commun.">
        <title>Identification of Tom5 and Tom6 in the preprotein translocase complex of human mitochondrial outer membrane.</title>
        <authorList>
            <person name="Kato H."/>
            <person name="Mihara K."/>
        </authorList>
    </citation>
    <scope>IDENTIFICATION IN THE TOM COMPLEX</scope>
</reference>
<reference key="12">
    <citation type="journal article" date="2008" name="Mol. Cell">
        <title>Kinase-selective enrichment enables quantitative phosphoproteomics of the kinome across the cell cycle.</title>
        <authorList>
            <person name="Daub H."/>
            <person name="Olsen J.V."/>
            <person name="Bairlein M."/>
            <person name="Gnad F."/>
            <person name="Oppermann F.S."/>
            <person name="Korner R."/>
            <person name="Greff Z."/>
            <person name="Keri G."/>
            <person name="Stemmann O."/>
            <person name="Mann M."/>
        </authorList>
    </citation>
    <scope>IDENTIFICATION BY MASS SPECTROMETRY [LARGE SCALE ANALYSIS]</scope>
    <source>
        <tissue>Cervix carcinoma</tissue>
    </source>
</reference>
<reference key="13">
    <citation type="journal article" date="2008" name="Proc. Natl. Acad. Sci. U.S.A.">
        <title>A quantitative atlas of mitotic phosphorylation.</title>
        <authorList>
            <person name="Dephoure N."/>
            <person name="Zhou C."/>
            <person name="Villen J."/>
            <person name="Beausoleil S.A."/>
            <person name="Bakalarski C.E."/>
            <person name="Elledge S.J."/>
            <person name="Gygi S.P."/>
        </authorList>
    </citation>
    <scope>PHOSPHORYLATION [LARGE SCALE ANALYSIS] AT SER-138</scope>
    <scope>IDENTIFICATION BY MASS SPECTROMETRY [LARGE SCALE ANALYSIS]</scope>
    <source>
        <tissue>Cervix carcinoma</tissue>
    </source>
</reference>
<reference key="14">
    <citation type="journal article" date="2009" name="Sci. Signal.">
        <title>Quantitative phosphoproteomic analysis of T cell receptor signaling reveals system-wide modulation of protein-protein interactions.</title>
        <authorList>
            <person name="Mayya V."/>
            <person name="Lundgren D.H."/>
            <person name="Hwang S.-I."/>
            <person name="Rezaul K."/>
            <person name="Wu L."/>
            <person name="Eng J.K."/>
            <person name="Rodionov V."/>
            <person name="Han D.K."/>
        </authorList>
    </citation>
    <scope>PHOSPHORYLATION [LARGE SCALE ANALYSIS] AT SER-135 AND SER-138</scope>
    <scope>IDENTIFICATION BY MASS SPECTROMETRY [LARGE SCALE ANALYSIS]</scope>
    <source>
        <tissue>Leukemic T-cell</tissue>
    </source>
</reference>
<reference key="15">
    <citation type="journal article" date="2010" name="Cell Res.">
        <title>Tom70 mediates activation of interferon regulatory factor 3 on mitochondria.</title>
        <authorList>
            <person name="Liu X.Y."/>
            <person name="Wei B."/>
            <person name="Shi H.X."/>
            <person name="Shan Y.F."/>
            <person name="Wang C."/>
        </authorList>
    </citation>
    <scope>SUBCELLULAR LOCATION</scope>
</reference>
<reference key="16">
    <citation type="journal article" date="2010" name="J. Biol. Chem.">
        <title>Identification and characterization of mitochondrial targeting sequence of human apurinic/apyrimidinic endonuclease 1.</title>
        <authorList>
            <person name="Li M."/>
            <person name="Zhong Z."/>
            <person name="Zhu J."/>
            <person name="Xiang D."/>
            <person name="Dai N."/>
            <person name="Cao X."/>
            <person name="Qing Y."/>
            <person name="Yang Z."/>
            <person name="Xie J."/>
            <person name="Li Z."/>
            <person name="Baugh L."/>
            <person name="Wang G."/>
            <person name="Wang D."/>
        </authorList>
    </citation>
    <scope>INTERACTION WITH APEX1</scope>
</reference>
<reference key="17">
    <citation type="journal article" date="2010" name="Sci. Signal.">
        <title>Quantitative phosphoproteomics reveals widespread full phosphorylation site occupancy during mitosis.</title>
        <authorList>
            <person name="Olsen J.V."/>
            <person name="Vermeulen M."/>
            <person name="Santamaria A."/>
            <person name="Kumar C."/>
            <person name="Miller M.L."/>
            <person name="Jensen L.J."/>
            <person name="Gnad F."/>
            <person name="Cox J."/>
            <person name="Jensen T.S."/>
            <person name="Nigg E.A."/>
            <person name="Brunak S."/>
            <person name="Mann M."/>
        </authorList>
    </citation>
    <scope>PHOSPHORYLATION [LARGE SCALE ANALYSIS] AT SER-135 AND SER-138</scope>
    <scope>IDENTIFICATION BY MASS SPECTROMETRY [LARGE SCALE ANALYSIS]</scope>
    <source>
        <tissue>Cervix carcinoma</tissue>
    </source>
</reference>
<reference key="18">
    <citation type="journal article" date="2011" name="BMC Syst. Biol.">
        <title>Initial characterization of the human central proteome.</title>
        <authorList>
            <person name="Burkard T.R."/>
            <person name="Planyavsky M."/>
            <person name="Kaupe I."/>
            <person name="Breitwieser F.P."/>
            <person name="Buerckstuemmer T."/>
            <person name="Bennett K.L."/>
            <person name="Superti-Furga G."/>
            <person name="Colinge J."/>
        </authorList>
    </citation>
    <scope>IDENTIFICATION BY MASS SPECTROMETRY [LARGE SCALE ANALYSIS]</scope>
</reference>
<reference key="19">
    <citation type="journal article" date="2011" name="Sci. Signal.">
        <title>System-wide temporal characterization of the proteome and phosphoproteome of human embryonic stem cell differentiation.</title>
        <authorList>
            <person name="Rigbolt K.T."/>
            <person name="Prokhorova T.A."/>
            <person name="Akimov V."/>
            <person name="Henningsen J."/>
            <person name="Johansen P.T."/>
            <person name="Kratchmarova I."/>
            <person name="Kassem M."/>
            <person name="Mann M."/>
            <person name="Olsen J.V."/>
            <person name="Blagoev B."/>
        </authorList>
    </citation>
    <scope>PHOSPHORYLATION [LARGE SCALE ANALYSIS] AT SER-135 AND SER-138</scope>
    <scope>IDENTIFICATION BY MASS SPECTROMETRY [LARGE SCALE ANALYSIS]</scope>
</reference>
<reference key="20">
    <citation type="journal article" date="2013" name="J. Proteome Res.">
        <title>Toward a comprehensive characterization of a human cancer cell phosphoproteome.</title>
        <authorList>
            <person name="Zhou H."/>
            <person name="Di Palma S."/>
            <person name="Preisinger C."/>
            <person name="Peng M."/>
            <person name="Polat A.N."/>
            <person name="Heck A.J."/>
            <person name="Mohammed S."/>
        </authorList>
    </citation>
    <scope>PHOSPHORYLATION [LARGE SCALE ANALYSIS] AT SER-135</scope>
    <scope>IDENTIFICATION BY MASS SPECTROMETRY [LARGE SCALE ANALYSIS]</scope>
    <source>
        <tissue>Cervix carcinoma</tissue>
        <tissue>Erythroleukemia</tissue>
    </source>
</reference>
<reference key="21">
    <citation type="journal article" date="2014" name="J. Proteomics">
        <title>An enzyme assisted RP-RPLC approach for in-depth analysis of human liver phosphoproteome.</title>
        <authorList>
            <person name="Bian Y."/>
            <person name="Song C."/>
            <person name="Cheng K."/>
            <person name="Dong M."/>
            <person name="Wang F."/>
            <person name="Huang J."/>
            <person name="Sun D."/>
            <person name="Wang L."/>
            <person name="Ye M."/>
            <person name="Zou H."/>
        </authorList>
    </citation>
    <scope>PHOSPHORYLATION [LARGE SCALE ANALYSIS] AT SER-135</scope>
    <scope>IDENTIFICATION BY MASS SPECTROMETRY [LARGE SCALE ANALYSIS]</scope>
    <source>
        <tissue>Liver</tissue>
    </source>
</reference>
<reference key="22">
    <citation type="journal article" date="2014" name="Nature">
        <title>The mitochondrial deubiquitinase USP30 opposes parkin-mediated mitophagy.</title>
        <authorList>
            <person name="Bingol B."/>
            <person name="Tea J.S."/>
            <person name="Phu L."/>
            <person name="Reichelt M."/>
            <person name="Bakalarski C.E."/>
            <person name="Song Q."/>
            <person name="Foreman O."/>
            <person name="Kirkpatrick D.S."/>
            <person name="Sheng M."/>
        </authorList>
    </citation>
    <scope>UBIQUITINATION AT LYS-56; LYS-61 AND LYS-68</scope>
    <scope>MUTAGENESIS OF LYS-56; LYS-61 AND LYS-68</scope>
    <scope>DEUBIQUITINATION</scope>
</reference>
<reference key="23">
    <citation type="journal article" date="2015" name="Biochim. Biophys. Acta">
        <title>The non-glycosylated isoform of MIC26 is a constituent of the mammalian MICOS complex and promotes formation of crista junctions.</title>
        <authorList>
            <person name="Koob S."/>
            <person name="Barrera M."/>
            <person name="Anand R."/>
            <person name="Reichert A.S."/>
        </authorList>
    </citation>
    <scope>SUBCELLULAR LOCATION</scope>
</reference>
<reference key="24">
    <citation type="journal article" date="2015" name="Elife">
        <title>QIL1 is a novel mitochondrial protein required for MICOS complex stability and cristae morphology.</title>
        <authorList>
            <person name="Guarani V."/>
            <person name="McNeill E.M."/>
            <person name="Paulo J.A."/>
            <person name="Huttlin E.L."/>
            <person name="Froehlich F."/>
            <person name="Gygi S.P."/>
            <person name="Van Vactor D."/>
            <person name="Harper J.W."/>
        </authorList>
    </citation>
    <scope>SUBCELLULAR LOCATION</scope>
</reference>
<reference key="25">
    <citation type="journal article" date="2015" name="Nat. Cell Biol.">
        <title>USP30 and parkin homeostatically regulate atypical ubiquitin chains on mitochondria.</title>
        <authorList>
            <person name="Cunningham C.N."/>
            <person name="Baughman J.M."/>
            <person name="Phu L."/>
            <person name="Tea J.S."/>
            <person name="Yu C."/>
            <person name="Coons M."/>
            <person name="Kirkpatrick D.S."/>
            <person name="Bingol B."/>
            <person name="Corn J.E."/>
        </authorList>
    </citation>
    <scope>UBIQUITINATION AT LYS-35; LYS-56 AND LYS-61</scope>
</reference>
<reference key="26">
    <citation type="journal article" date="2015" name="Proteomics">
        <title>N-terminome analysis of the human mitochondrial proteome.</title>
        <authorList>
            <person name="Vaca Jacome A.S."/>
            <person name="Rabilloud T."/>
            <person name="Schaeffer-Reiss C."/>
            <person name="Rompais M."/>
            <person name="Ayoub D."/>
            <person name="Lane L."/>
            <person name="Bairoch A."/>
            <person name="Van Dorsselaer A."/>
            <person name="Carapito C."/>
        </authorList>
    </citation>
    <scope>IDENTIFICATION BY MASS SPECTROMETRY [LARGE SCALE ANALYSIS]</scope>
</reference>
<reference key="27">
    <citation type="journal article" date="2019" name="PLoS ONE">
        <title>Armadillo repeat-containing protein 1 is a dual localization protein associated with mitochondrial intermembrane space bridging complex.</title>
        <authorList>
            <person name="Wagner F."/>
            <person name="Kunz T.C."/>
            <person name="Chowdhury S.R."/>
            <person name="Thiede B."/>
            <person name="Fraunholz M."/>
            <person name="Eger D."/>
            <person name="Kozjak-Pavlovic V."/>
        </authorList>
    </citation>
    <scope>SUBCELLULAR LOCATION</scope>
</reference>
<reference key="28">
    <citation type="journal article" date="2024" name="Proc. Natl. Acad. Sci. U.S.A.">
        <title>Tom20 gates PINK1 activity and mediates its tethering of the TOM and TIM23 translocases upon mitochondrial stress.</title>
        <authorList>
            <person name="Eldeeb M.A."/>
            <person name="Bayne A.N."/>
            <person name="Fallahi A."/>
            <person name="Goiran T."/>
            <person name="MacDougall E.J."/>
            <person name="Soumbasis A."/>
            <person name="Zorca C.E."/>
            <person name="Tabah J.J."/>
            <person name="Thomas R.A."/>
            <person name="Karpilovsky N."/>
            <person name="Mathur M."/>
            <person name="Durcan T.M."/>
            <person name="Trempe J.F."/>
            <person name="Fon E.A."/>
        </authorList>
    </citation>
    <scope>INTERACTION WITH PINK1</scope>
</reference>
<reference key="29">
    <citation type="journal article" date="2024" name="Sci. Adv.">
        <title>Mechanism of human PINK1 activation at the TOM complex in a reconstituted system.</title>
        <authorList>
            <person name="Raimi O.G."/>
            <person name="Ojha H."/>
            <person name="Ehses K."/>
            <person name="Dederer V."/>
            <person name="Lange S.M."/>
            <person name="Rivera C.P."/>
            <person name="Deegan T.D."/>
            <person name="Chen Y."/>
            <person name="Wightman M."/>
            <person name="Toth R."/>
            <person name="Labib K.P.M."/>
            <person name="Mathea S."/>
            <person name="Ranson N."/>
            <person name="Fernandez-Busnadiego R."/>
            <person name="Muqit M.M.K."/>
        </authorList>
    </citation>
    <scope>INTERACTION WITH PINK1</scope>
</reference>
<accession>Q15388</accession>
<accession>A8K195</accession>
<accession>Q498B3</accession>
<accession>Q6IBT4</accession>
<keyword id="KW-0002">3D-structure</keyword>
<keyword id="KW-1017">Isopeptide bond</keyword>
<keyword id="KW-0472">Membrane</keyword>
<keyword id="KW-0496">Mitochondrion</keyword>
<keyword id="KW-1000">Mitochondrion outer membrane</keyword>
<keyword id="KW-0597">Phosphoprotein</keyword>
<keyword id="KW-0653">Protein transport</keyword>
<keyword id="KW-1267">Proteomics identification</keyword>
<keyword id="KW-1185">Reference proteome</keyword>
<keyword id="KW-0812">Transmembrane</keyword>
<keyword id="KW-1133">Transmembrane helix</keyword>
<keyword id="KW-0813">Transport</keyword>
<keyword id="KW-0832">Ubl conjugation</keyword>
<protein>
    <recommendedName>
        <fullName>Mitochondrial import receptor subunit TOM20 homolog</fullName>
    </recommendedName>
    <alternativeName>
        <fullName>Mitochondrial 20 kDa outer membrane protein</fullName>
    </alternativeName>
    <alternativeName>
        <fullName>Outer mitochondrial membrane receptor Tom20</fullName>
    </alternativeName>
</protein>
<sequence length="145" mass="16298">MVGRNSAIAAGVCGALFIGYCIYFDRKRRSDPNFKNRLRERRKKQKLAKERAGLSKLPDLKDAEAVQKFFLEEIQLGEELLAQGEYEKGVDHLTNAIAVCGQPQQLLQVLQQTLPPPVFQMLLTKLPTISQRIVSAQSLAEDDVE</sequence>
<name>TOM20_HUMAN</name>
<feature type="chain" id="PRO_0000051538" description="Mitochondrial import receptor subunit TOM20 homolog">
    <location>
        <begin position="1"/>
        <end position="145"/>
    </location>
</feature>
<feature type="topological domain" description="Mitochondrial intermembrane" evidence="4">
    <location>
        <begin position="1"/>
        <end position="6"/>
    </location>
</feature>
<feature type="transmembrane region" description="Helical" evidence="4">
    <location>
        <begin position="7"/>
        <end position="24"/>
    </location>
</feature>
<feature type="topological domain" description="Cytoplasmic" evidence="4">
    <location>
        <begin position="25"/>
        <end position="145"/>
    </location>
</feature>
<feature type="modified residue" description="Phosphoserine" evidence="18 19 20 21 22">
    <location>
        <position position="135"/>
    </location>
</feature>
<feature type="modified residue" description="Phosphoserine" evidence="16 17 18 19 20">
    <location>
        <position position="138"/>
    </location>
</feature>
<feature type="cross-link" description="Glycyl lysine isopeptide (Lys-Gly) (interchain with G-Cter in ubiquitin)" evidence="9">
    <location>
        <position position="35"/>
    </location>
</feature>
<feature type="cross-link" description="Glycyl lysine isopeptide (Lys-Gly) (interchain with G-Cter in ubiquitin)" evidence="8 9">
    <location>
        <position position="56"/>
    </location>
</feature>
<feature type="cross-link" description="Glycyl lysine isopeptide (Lys-Gly) (interchain with G-Cter in ubiquitin)" evidence="8 9">
    <location>
        <position position="61"/>
    </location>
</feature>
<feature type="cross-link" description="Glycyl lysine isopeptide (Lys-Gly) (interchain with G-Cter in ubiquitin)" evidence="8">
    <location>
        <position position="68"/>
    </location>
</feature>
<feature type="sequence variant" id="VAR_052366" description="In dbSNP:rs16991984.">
    <original>P</original>
    <variation>L</variation>
    <location>
        <position position="117"/>
    </location>
</feature>
<feature type="sequence variant" id="VAR_052367" description="In dbSNP:rs778955929.">
    <original>V</original>
    <variation>L</variation>
    <location>
        <position position="134"/>
    </location>
</feature>
<feature type="mutagenesis site" description="Defects in mitophagy; when associated with R-61 and R-68." evidence="8">
    <original>K</original>
    <variation>R</variation>
    <location>
        <position position="56"/>
    </location>
</feature>
<feature type="mutagenesis site" description="Defects in mitophagy; when associated with R-56 and R-68." evidence="8">
    <original>K</original>
    <variation>R</variation>
    <location>
        <position position="61"/>
    </location>
</feature>
<feature type="mutagenesis site" description="Defects in mitophagy; when associated with R-56 and R-61." evidence="8">
    <original>K</original>
    <variation>R</variation>
    <location>
        <position position="68"/>
    </location>
</feature>
<feature type="sequence conflict" description="In Ref. 6; CAG32999." evidence="15" ref="6">
    <original>E</original>
    <variation>D</variation>
    <location>
        <position position="145"/>
    </location>
</feature>
<dbReference type="EMBL" id="AF126962">
    <property type="protein sequence ID" value="AAF13354.1"/>
    <property type="molecule type" value="Genomic_DNA"/>
</dbReference>
<dbReference type="EMBL" id="AF126958">
    <property type="protein sequence ID" value="AAF13354.1"/>
    <property type="status" value="JOINED"/>
    <property type="molecule type" value="Genomic_DNA"/>
</dbReference>
<dbReference type="EMBL" id="AF126959">
    <property type="protein sequence ID" value="AAF13354.1"/>
    <property type="status" value="JOINED"/>
    <property type="molecule type" value="Genomic_DNA"/>
</dbReference>
<dbReference type="EMBL" id="AF126960">
    <property type="protein sequence ID" value="AAF13354.1"/>
    <property type="status" value="JOINED"/>
    <property type="molecule type" value="Genomic_DNA"/>
</dbReference>
<dbReference type="EMBL" id="AF126961">
    <property type="protein sequence ID" value="AAF13354.1"/>
    <property type="status" value="JOINED"/>
    <property type="molecule type" value="Genomic_DNA"/>
</dbReference>
<dbReference type="EMBL" id="D13641">
    <property type="protein sequence ID" value="BAA02804.1"/>
    <property type="molecule type" value="mRNA"/>
</dbReference>
<dbReference type="EMBL" id="AK289810">
    <property type="protein sequence ID" value="BAF82499.1"/>
    <property type="molecule type" value="mRNA"/>
</dbReference>
<dbReference type="EMBL" id="CR456718">
    <property type="protein sequence ID" value="CAG32999.1"/>
    <property type="molecule type" value="mRNA"/>
</dbReference>
<dbReference type="EMBL" id="AL732292">
    <property type="status" value="NOT_ANNOTATED_CDS"/>
    <property type="molecule type" value="Genomic_DNA"/>
</dbReference>
<dbReference type="EMBL" id="CH471098">
    <property type="protein sequence ID" value="EAW70003.1"/>
    <property type="molecule type" value="Genomic_DNA"/>
</dbReference>
<dbReference type="EMBL" id="BC000882">
    <property type="protein sequence ID" value="AAH00882.1"/>
    <property type="molecule type" value="mRNA"/>
</dbReference>
<dbReference type="EMBL" id="BC066335">
    <property type="protein sequence ID" value="AAH66335.1"/>
    <property type="molecule type" value="mRNA"/>
</dbReference>
<dbReference type="EMBL" id="BC071994">
    <property type="protein sequence ID" value="AAH71994.1"/>
    <property type="molecule type" value="mRNA"/>
</dbReference>
<dbReference type="EMBL" id="BC100286">
    <property type="protein sequence ID" value="AAI00287.1"/>
    <property type="molecule type" value="mRNA"/>
</dbReference>
<dbReference type="EMBL" id="BC107851">
    <property type="protein sequence ID" value="AAI07852.1"/>
    <property type="molecule type" value="mRNA"/>
</dbReference>
<dbReference type="CCDS" id="CCDS1603.1"/>
<dbReference type="PIR" id="S68215">
    <property type="entry name" value="S68215"/>
</dbReference>
<dbReference type="RefSeq" id="NP_055580.1">
    <property type="nucleotide sequence ID" value="NM_014765.3"/>
</dbReference>
<dbReference type="PDB" id="4APO">
    <property type="method" value="X-ray"/>
    <property type="resolution" value="1.90 A"/>
    <property type="chains" value="D/E=140-145"/>
</dbReference>
<dbReference type="PDB" id="7VBY">
    <property type="method" value="EM"/>
    <property type="resolution" value="2.54 A"/>
    <property type="chains" value="B/I=1-145"/>
</dbReference>
<dbReference type="PDB" id="7VC9">
    <property type="method" value="EM"/>
    <property type="resolution" value="13.00 A"/>
    <property type="chains" value="M/N=1-145"/>
</dbReference>
<dbReference type="PDB" id="8XVA">
    <property type="method" value="EM"/>
    <property type="resolution" value="5.92 A"/>
    <property type="chains" value="K=1-145"/>
</dbReference>
<dbReference type="PDB" id="9EIH">
    <property type="method" value="EM"/>
    <property type="resolution" value="3.10 A"/>
    <property type="chains" value="C/D=1-145"/>
</dbReference>
<dbReference type="PDB" id="9EII">
    <property type="method" value="EM"/>
    <property type="resolution" value="2.75 A"/>
    <property type="chains" value="D=1-145"/>
</dbReference>
<dbReference type="PDB" id="9EIJ">
    <property type="method" value="EM"/>
    <property type="resolution" value="3.30 A"/>
    <property type="chains" value="D=1-145"/>
</dbReference>
<dbReference type="PDBsum" id="4APO"/>
<dbReference type="PDBsum" id="7VBY"/>
<dbReference type="PDBsum" id="7VC9"/>
<dbReference type="PDBsum" id="8XVA"/>
<dbReference type="PDBsum" id="9EIH"/>
<dbReference type="PDBsum" id="9EII"/>
<dbReference type="PDBsum" id="9EIJ"/>
<dbReference type="BMRB" id="Q15388"/>
<dbReference type="EMDB" id="EMD-31889"/>
<dbReference type="EMDB" id="EMD-38694"/>
<dbReference type="EMDB" id="EMD-48083"/>
<dbReference type="EMDB" id="EMD-48084"/>
<dbReference type="EMDB" id="EMD-48085"/>
<dbReference type="SMR" id="Q15388"/>
<dbReference type="BioGRID" id="115144">
    <property type="interactions" value="245"/>
</dbReference>
<dbReference type="ComplexPortal" id="CPX-6121">
    <property type="entry name" value="TOM40 mitochondrial outer membrane translocase complex"/>
</dbReference>
<dbReference type="CORUM" id="Q15388"/>
<dbReference type="DIP" id="DIP-46735N"/>
<dbReference type="FunCoup" id="Q15388">
    <property type="interactions" value="1541"/>
</dbReference>
<dbReference type="IntAct" id="Q15388">
    <property type="interactions" value="184"/>
</dbReference>
<dbReference type="MINT" id="Q15388"/>
<dbReference type="STRING" id="9606.ENSP00000355566"/>
<dbReference type="iPTMnet" id="Q15388"/>
<dbReference type="PhosphoSitePlus" id="Q15388"/>
<dbReference type="BioMuta" id="TOMM20"/>
<dbReference type="DMDM" id="2498697"/>
<dbReference type="jPOST" id="Q15388"/>
<dbReference type="MassIVE" id="Q15388"/>
<dbReference type="PaxDb" id="9606-ENSP00000355566"/>
<dbReference type="PeptideAtlas" id="Q15388"/>
<dbReference type="ProteomicsDB" id="60558"/>
<dbReference type="Pumba" id="Q15388"/>
<dbReference type="TopDownProteomics" id="Q15388"/>
<dbReference type="Antibodypedia" id="2619">
    <property type="antibodies" value="240 antibodies from 34 providers"/>
</dbReference>
<dbReference type="DNASU" id="9804"/>
<dbReference type="Ensembl" id="ENST00000366607.5">
    <property type="protein sequence ID" value="ENSP00000355566.4"/>
    <property type="gene ID" value="ENSG00000173726.11"/>
</dbReference>
<dbReference type="GeneID" id="9804"/>
<dbReference type="KEGG" id="hsa:9804"/>
<dbReference type="MANE-Select" id="ENST00000366607.5">
    <property type="protein sequence ID" value="ENSP00000355566.4"/>
    <property type="RefSeq nucleotide sequence ID" value="NM_014765.3"/>
    <property type="RefSeq protein sequence ID" value="NP_055580.1"/>
</dbReference>
<dbReference type="UCSC" id="uc001hwl.4">
    <property type="organism name" value="human"/>
</dbReference>
<dbReference type="AGR" id="HGNC:20947"/>
<dbReference type="CTD" id="9804"/>
<dbReference type="DisGeNET" id="9804"/>
<dbReference type="GeneCards" id="TOMM20"/>
<dbReference type="HGNC" id="HGNC:20947">
    <property type="gene designation" value="TOMM20"/>
</dbReference>
<dbReference type="HPA" id="ENSG00000173726">
    <property type="expression patterns" value="Low tissue specificity"/>
</dbReference>
<dbReference type="MIM" id="601848">
    <property type="type" value="gene"/>
</dbReference>
<dbReference type="neXtProt" id="NX_Q15388"/>
<dbReference type="OpenTargets" id="ENSG00000173726"/>
<dbReference type="PharmGKB" id="PA134964372"/>
<dbReference type="VEuPathDB" id="HostDB:ENSG00000173726"/>
<dbReference type="eggNOG" id="KOG4056">
    <property type="taxonomic scope" value="Eukaryota"/>
</dbReference>
<dbReference type="GeneTree" id="ENSGT00390000011698"/>
<dbReference type="HOGENOM" id="CLU_100000_0_0_1"/>
<dbReference type="InParanoid" id="Q15388"/>
<dbReference type="OMA" id="PPPIFQI"/>
<dbReference type="OrthoDB" id="2154253at2759"/>
<dbReference type="PAN-GO" id="Q15388">
    <property type="GO annotations" value="6 GO annotations based on evolutionary models"/>
</dbReference>
<dbReference type="PhylomeDB" id="Q15388"/>
<dbReference type="TreeFam" id="TF106200"/>
<dbReference type="PathwayCommons" id="Q15388"/>
<dbReference type="Reactome" id="R-HSA-1268020">
    <property type="pathway name" value="Mitochondrial protein import"/>
</dbReference>
<dbReference type="Reactome" id="R-HSA-5205685">
    <property type="pathway name" value="PINK1-PRKN Mediated Mitophagy"/>
</dbReference>
<dbReference type="Reactome" id="R-HSA-5689880">
    <property type="pathway name" value="Ub-specific processing proteases"/>
</dbReference>
<dbReference type="SignaLink" id="Q15388"/>
<dbReference type="SIGNOR" id="Q15388"/>
<dbReference type="BioGRID-ORCS" id="9804">
    <property type="hits" value="630 hits in 1125 CRISPR screens"/>
</dbReference>
<dbReference type="CD-CODE" id="FB4E32DD">
    <property type="entry name" value="Presynaptic clusters and postsynaptic densities"/>
</dbReference>
<dbReference type="ChiTaRS" id="TOMM20">
    <property type="organism name" value="human"/>
</dbReference>
<dbReference type="EvolutionaryTrace" id="Q15388"/>
<dbReference type="GeneWiki" id="TOMM20"/>
<dbReference type="GenomeRNAi" id="9804"/>
<dbReference type="Pharos" id="Q15388">
    <property type="development level" value="Tbio"/>
</dbReference>
<dbReference type="PRO" id="PR:Q15388"/>
<dbReference type="Proteomes" id="UP000005640">
    <property type="component" value="Chromosome 1"/>
</dbReference>
<dbReference type="RNAct" id="Q15388">
    <property type="molecule type" value="protein"/>
</dbReference>
<dbReference type="Bgee" id="ENSG00000173726">
    <property type="expression patterns" value="Expressed in parotid gland and 208 other cell types or tissues"/>
</dbReference>
<dbReference type="ExpressionAtlas" id="Q15388">
    <property type="expression patterns" value="baseline and differential"/>
</dbReference>
<dbReference type="GO" id="GO:0071944">
    <property type="term" value="C:cell periphery"/>
    <property type="evidence" value="ECO:0007669"/>
    <property type="project" value="Ensembl"/>
</dbReference>
<dbReference type="GO" id="GO:0140494">
    <property type="term" value="C:migrasome"/>
    <property type="evidence" value="ECO:0007669"/>
    <property type="project" value="Ensembl"/>
</dbReference>
<dbReference type="GO" id="GO:0044233">
    <property type="term" value="C:mitochondria-associated endoplasmic reticulum membrane contact site"/>
    <property type="evidence" value="ECO:0000314"/>
    <property type="project" value="MGI"/>
</dbReference>
<dbReference type="GO" id="GO:0005741">
    <property type="term" value="C:mitochondrial outer membrane"/>
    <property type="evidence" value="ECO:0000314"/>
    <property type="project" value="UniProtKB"/>
</dbReference>
<dbReference type="GO" id="GO:0005742">
    <property type="term" value="C:mitochondrial outer membrane translocase complex"/>
    <property type="evidence" value="ECO:0000318"/>
    <property type="project" value="GO_Central"/>
</dbReference>
<dbReference type="GO" id="GO:0005739">
    <property type="term" value="C:mitochondrion"/>
    <property type="evidence" value="ECO:0000314"/>
    <property type="project" value="UniProtKB"/>
</dbReference>
<dbReference type="GO" id="GO:0097225">
    <property type="term" value="C:sperm midpiece"/>
    <property type="evidence" value="ECO:0000250"/>
    <property type="project" value="UniProtKB"/>
</dbReference>
<dbReference type="GO" id="GO:0140596">
    <property type="term" value="C:TOM complex"/>
    <property type="evidence" value="ECO:0000303"/>
    <property type="project" value="ComplexPortal"/>
</dbReference>
<dbReference type="GO" id="GO:0030943">
    <property type="term" value="F:mitochondrion targeting sequence binding"/>
    <property type="evidence" value="ECO:0000314"/>
    <property type="project" value="FlyBase"/>
</dbReference>
<dbReference type="GO" id="GO:0015450">
    <property type="term" value="F:protein-transporting ATPase activity"/>
    <property type="evidence" value="ECO:0000314"/>
    <property type="project" value="HGNC-UCL"/>
</dbReference>
<dbReference type="GO" id="GO:0051082">
    <property type="term" value="F:unfolded protein binding"/>
    <property type="evidence" value="ECO:0000314"/>
    <property type="project" value="HGNC-UCL"/>
</dbReference>
<dbReference type="GO" id="GO:0030150">
    <property type="term" value="P:protein import into mitochondrial matrix"/>
    <property type="evidence" value="ECO:0000318"/>
    <property type="project" value="GO_Central"/>
</dbReference>
<dbReference type="GO" id="GO:0045040">
    <property type="term" value="P:protein insertion into mitochondrial outer membrane"/>
    <property type="evidence" value="ECO:0000303"/>
    <property type="project" value="ComplexPortal"/>
</dbReference>
<dbReference type="GO" id="GO:0006626">
    <property type="term" value="P:protein targeting to mitochondrion"/>
    <property type="evidence" value="ECO:0000314"/>
    <property type="project" value="HGNC-UCL"/>
</dbReference>
<dbReference type="GO" id="GO:0016031">
    <property type="term" value="P:tRNA import into mitochondrion"/>
    <property type="evidence" value="ECO:0000318"/>
    <property type="project" value="GO_Central"/>
</dbReference>
<dbReference type="FunFam" id="1.20.960.10:FF:000001">
    <property type="entry name" value="Mitochondrial import receptor subunit TOM20 homolog"/>
    <property type="match status" value="1"/>
</dbReference>
<dbReference type="Gene3D" id="1.20.960.10">
    <property type="entry name" value="Mitochondrial outer membrane translocase complex, subunit Tom20 domain"/>
    <property type="match status" value="1"/>
</dbReference>
<dbReference type="InterPro" id="IPR002056">
    <property type="entry name" value="MAS20"/>
</dbReference>
<dbReference type="InterPro" id="IPR022422">
    <property type="entry name" value="MAS20_rcpt_metazoan"/>
</dbReference>
<dbReference type="InterPro" id="IPR023392">
    <property type="entry name" value="Tom20_dom_sf"/>
</dbReference>
<dbReference type="NCBIfam" id="TIGR00985">
    <property type="entry name" value="3a0801s04tom"/>
    <property type="match status" value="1"/>
</dbReference>
<dbReference type="PANTHER" id="PTHR12430">
    <property type="entry name" value="MITOCHONDRIAL IMPORT RECEPTOR SUBUNIT TOM20"/>
    <property type="match status" value="1"/>
</dbReference>
<dbReference type="PANTHER" id="PTHR12430:SF2">
    <property type="entry name" value="MITOCHONDRIAL IMPORT RECEPTOR SUBUNIT TOM20 HOMOLOG"/>
    <property type="match status" value="1"/>
</dbReference>
<dbReference type="Pfam" id="PF02064">
    <property type="entry name" value="MAS20"/>
    <property type="match status" value="1"/>
</dbReference>
<dbReference type="PIRSF" id="PIRSF037707">
    <property type="entry name" value="MAS20_rcpt"/>
    <property type="match status" value="1"/>
</dbReference>
<dbReference type="PRINTS" id="PR01989">
    <property type="entry name" value="EUOM20RECPTR"/>
</dbReference>
<dbReference type="PRINTS" id="PR00351">
    <property type="entry name" value="OM20RECEPTOR"/>
</dbReference>
<dbReference type="SUPFAM" id="SSF47157">
    <property type="entry name" value="Mitochondrial import receptor subunit Tom20"/>
    <property type="match status" value="1"/>
</dbReference>
<comment type="function">
    <text evidence="1 2">Central component of the receptor complex responsible for the recognition and translocation of cytosolically synthesized mitochondrial preproteins. Together with TOM22 functions as the transit peptide receptor at the surface of the mitochondrion outer membrane and facilitates the movement of preproteins into the TOM40 translocation pore (By similarity). Required for the translocation across the mitochondrial outer membrane of cytochrome P450 monooxygenases.</text>
</comment>
<comment type="subunit">
    <text evidence="3 5 6 13 14">Forms part of the preprotein translocase complex of the outer mitochondrial membrane (TOM complex) which consists of at least 7 different proteins (TOMM5, TOMM6, TOMM7, TOMM20, TOMM22, TOMM40 and TOMM70). Interacts with TOM22. Interacts with APEX1 (PubMed:20231292). Interacts with TBC1D21 (By similarity). Upon mitochondrial depolarization, interacts with PINK1; the interaction is required for PINK1-TOM-TIM23 supercomplex formation which is critical for PINK1 stabilization at the outer mitochondrial membrane, kinase activation and downstream mitophagy (PubMed:38416681, PubMed:38848361).</text>
</comment>
<comment type="interaction">
    <interactant intactId="EBI-711636">
        <id>Q15388</id>
    </interactant>
    <interactant intactId="EBI-1180558">
        <id>Q9P0U1</id>
        <label>TOMM7</label>
    </interactant>
    <organismsDiffer>false</organismsDiffer>
    <experiments>2</experiments>
</comment>
<comment type="subcellular location">
    <subcellularLocation>
        <location evidence="7 10 11 12">Mitochondrion outer membrane</location>
        <topology evidence="4">Single-pass membrane protein</topology>
    </subcellularLocation>
</comment>
<comment type="PTM">
    <text evidence="8 9">Ubiquitinated by PRKN during mitophagy, leading to its degradation and enhancement of mitophagy. Deubiquitinated by USP30.</text>
</comment>
<comment type="similarity">
    <text evidence="15">Belongs to the Tom20 family.</text>
</comment>